<accession>Q2V2V3</accession>
<evidence type="ECO:0000255" key="1">
    <source>
        <dbReference type="PROSITE-ProRule" id="PRU00152"/>
    </source>
</evidence>
<evidence type="ECO:0000305" key="2"/>
<evidence type="ECO:0000312" key="3">
    <source>
        <dbReference type="Araport" id="AT5G65158"/>
    </source>
</evidence>
<sequence length="104" mass="11687">MSLRLYDSYGQDAVISDLVSWGGLMGPFHDYFERGNLDIFSGLGSCLSGPVCAMNLTSDGSGDHHGWYCNYVEVTMSESRRRSCSQEKFEVEQWLARDASPYEL</sequence>
<gene>
    <name evidence="2" type="primary">PLAT3</name>
    <name evidence="3" type="ordered locus">At5g65158</name>
</gene>
<protein>
    <recommendedName>
        <fullName evidence="2">PLAT domain-containing protein 3</fullName>
        <shortName evidence="2">AtPLAT3</shortName>
        <shortName evidence="2">PLAT domain protein 3</shortName>
    </recommendedName>
</protein>
<proteinExistence type="predicted"/>
<name>PLAT3_ARATH</name>
<keyword id="KW-1185">Reference proteome</keyword>
<dbReference type="EMBL" id="AB013395">
    <property type="status" value="NOT_ANNOTATED_CDS"/>
    <property type="molecule type" value="Genomic_DNA"/>
</dbReference>
<dbReference type="EMBL" id="CP002688">
    <property type="protein sequence ID" value="AED98009.1"/>
    <property type="molecule type" value="Genomic_DNA"/>
</dbReference>
<dbReference type="EMBL" id="EF182923">
    <property type="status" value="NOT_ANNOTATED_CDS"/>
    <property type="molecule type" value="mRNA"/>
</dbReference>
<dbReference type="RefSeq" id="NP_001032146.1">
    <property type="nucleotide sequence ID" value="NM_001037069.5"/>
</dbReference>
<dbReference type="STRING" id="3702.Q2V2V3"/>
<dbReference type="PaxDb" id="3702-AT5G65158.1"/>
<dbReference type="EnsemblPlants" id="AT5G65158.1">
    <property type="protein sequence ID" value="AT5G65158.1"/>
    <property type="gene ID" value="AT5G65158"/>
</dbReference>
<dbReference type="GeneID" id="3771559"/>
<dbReference type="Gramene" id="AT5G65158.1">
    <property type="protein sequence ID" value="AT5G65158.1"/>
    <property type="gene ID" value="AT5G65158"/>
</dbReference>
<dbReference type="KEGG" id="ath:AT5G65158"/>
<dbReference type="Araport" id="AT5G65158"/>
<dbReference type="TAIR" id="AT5G65158">
    <property type="gene designation" value="PLAT3"/>
</dbReference>
<dbReference type="eggNOG" id="ENOG502RZE1">
    <property type="taxonomic scope" value="Eukaryota"/>
</dbReference>
<dbReference type="HOGENOM" id="CLU_2253825_0_0_1"/>
<dbReference type="InParanoid" id="Q2V2V3"/>
<dbReference type="OMA" id="CSQEKFE"/>
<dbReference type="PhylomeDB" id="Q2V2V3"/>
<dbReference type="PRO" id="PR:Q2V2V3"/>
<dbReference type="Proteomes" id="UP000006548">
    <property type="component" value="Chromosome 5"/>
</dbReference>
<dbReference type="ExpressionAtlas" id="Q2V2V3">
    <property type="expression patterns" value="baseline and differential"/>
</dbReference>
<dbReference type="Gene3D" id="2.60.60.20">
    <property type="entry name" value="PLAT/LH2 domain"/>
    <property type="match status" value="1"/>
</dbReference>
<dbReference type="InterPro" id="IPR001024">
    <property type="entry name" value="PLAT/LH2_dom"/>
</dbReference>
<dbReference type="InterPro" id="IPR036392">
    <property type="entry name" value="PLAT/LH2_dom_sf"/>
</dbReference>
<dbReference type="PANTHER" id="PTHR31718">
    <property type="entry name" value="PLAT DOMAIN-CONTAINING PROTEIN"/>
    <property type="match status" value="1"/>
</dbReference>
<dbReference type="PANTHER" id="PTHR31718:SF41">
    <property type="entry name" value="PLAT DOMAIN-CONTAINING PROTEIN"/>
    <property type="match status" value="1"/>
</dbReference>
<dbReference type="Pfam" id="PF01477">
    <property type="entry name" value="PLAT"/>
    <property type="match status" value="1"/>
</dbReference>
<dbReference type="SUPFAM" id="SSF49723">
    <property type="entry name" value="Lipase/lipooxygenase domain (PLAT/LH2 domain)"/>
    <property type="match status" value="1"/>
</dbReference>
<dbReference type="PROSITE" id="PS50095">
    <property type="entry name" value="PLAT"/>
    <property type="match status" value="1"/>
</dbReference>
<reference key="1">
    <citation type="journal article" date="1998" name="DNA Res.">
        <title>Structural analysis of Arabidopsis thaliana chromosome 5. VI. Sequence features of the regions of 1,367,185 bp covered by 19 physically assigned P1 and TAC clones.</title>
        <authorList>
            <person name="Kotani H."/>
            <person name="Nakamura Y."/>
            <person name="Sato S."/>
            <person name="Asamizu E."/>
            <person name="Kaneko T."/>
            <person name="Miyajima N."/>
            <person name="Tabata S."/>
        </authorList>
    </citation>
    <scope>NUCLEOTIDE SEQUENCE [LARGE SCALE GENOMIC DNA]</scope>
    <source>
        <strain>cv. Columbia</strain>
    </source>
</reference>
<reference key="2">
    <citation type="journal article" date="2017" name="Plant J.">
        <title>Araport11: a complete reannotation of the Arabidopsis thaliana reference genome.</title>
        <authorList>
            <person name="Cheng C.Y."/>
            <person name="Krishnakumar V."/>
            <person name="Chan A.P."/>
            <person name="Thibaud-Nissen F."/>
            <person name="Schobel S."/>
            <person name="Town C.D."/>
        </authorList>
    </citation>
    <scope>GENOME REANNOTATION</scope>
    <source>
        <strain>cv. Columbia</strain>
    </source>
</reference>
<reference key="3">
    <citation type="journal article" date="2007" name="BMC Genomics">
        <title>Experimental validation of novel genes predicted in the un-annotated regions of the Arabidopsis genome.</title>
        <authorList>
            <person name="Moskal W.A. Jr."/>
            <person name="Wu H.C."/>
            <person name="Underwood B.A."/>
            <person name="Wang W."/>
            <person name="Town C.D."/>
            <person name="Xiao Y.-L."/>
        </authorList>
    </citation>
    <scope>NUCLEOTIDE SEQUENCE [LARGE SCALE MRNA]</scope>
    <source>
        <strain>cv. Columbia</strain>
    </source>
</reference>
<organism>
    <name type="scientific">Arabidopsis thaliana</name>
    <name type="common">Mouse-ear cress</name>
    <dbReference type="NCBI Taxonomy" id="3702"/>
    <lineage>
        <taxon>Eukaryota</taxon>
        <taxon>Viridiplantae</taxon>
        <taxon>Streptophyta</taxon>
        <taxon>Embryophyta</taxon>
        <taxon>Tracheophyta</taxon>
        <taxon>Spermatophyta</taxon>
        <taxon>Magnoliopsida</taxon>
        <taxon>eudicotyledons</taxon>
        <taxon>Gunneridae</taxon>
        <taxon>Pentapetalae</taxon>
        <taxon>rosids</taxon>
        <taxon>malvids</taxon>
        <taxon>Brassicales</taxon>
        <taxon>Brassicaceae</taxon>
        <taxon>Camelineae</taxon>
        <taxon>Arabidopsis</taxon>
    </lineage>
</organism>
<feature type="chain" id="PRO_0000437076" description="PLAT domain-containing protein 3">
    <location>
        <begin position="1"/>
        <end position="104"/>
    </location>
</feature>
<feature type="domain" description="PLAT" evidence="1">
    <location>
        <begin position="1"/>
        <end position="104"/>
    </location>
</feature>